<comment type="catalytic activity">
    <reaction evidence="5">
        <text>S-ubiquitinyl-[E2 ubiquitin-conjugating enzyme]-L-cysteine + [acceptor protein]-L-lysine = [E2 ubiquitin-conjugating enzyme]-L-cysteine + N(6)-ubiquitinyl-[acceptor protein]-L-lysine.</text>
        <dbReference type="EC" id="2.3.2.27"/>
    </reaction>
</comment>
<comment type="pathway">
    <text>Protein modification; protein ubiquitination.</text>
</comment>
<comment type="subcellular location">
    <subcellularLocation>
        <location evidence="5">Membrane</location>
        <topology evidence="5">Single-pass membrane protein</topology>
    </subcellularLocation>
</comment>
<comment type="domain">
    <text evidence="1">The RING-type zinc finger domain mediates binding to an E2 ubiquitin-conjugating enzyme.</text>
</comment>
<comment type="similarity">
    <text evidence="5">Belongs to the RING-type zinc finger family. ATL subfamily.</text>
</comment>
<keyword id="KW-0472">Membrane</keyword>
<keyword id="KW-0479">Metal-binding</keyword>
<keyword id="KW-1185">Reference proteome</keyword>
<keyword id="KW-0808">Transferase</keyword>
<keyword id="KW-0812">Transmembrane</keyword>
<keyword id="KW-1133">Transmembrane helix</keyword>
<keyword id="KW-0833">Ubl conjugation pathway</keyword>
<keyword id="KW-0862">Zinc</keyword>
<keyword id="KW-0863">Zinc-finger</keyword>
<reference key="1">
    <citation type="journal article" date="1999" name="Nature">
        <title>Sequence and analysis of chromosome 2 of the plant Arabidopsis thaliana.</title>
        <authorList>
            <person name="Lin X."/>
            <person name="Kaul S."/>
            <person name="Rounsley S.D."/>
            <person name="Shea T.P."/>
            <person name="Benito M.-I."/>
            <person name="Town C.D."/>
            <person name="Fujii C.Y."/>
            <person name="Mason T.M."/>
            <person name="Bowman C.L."/>
            <person name="Barnstead M.E."/>
            <person name="Feldblyum T.V."/>
            <person name="Buell C.R."/>
            <person name="Ketchum K.A."/>
            <person name="Lee J.J."/>
            <person name="Ronning C.M."/>
            <person name="Koo H.L."/>
            <person name="Moffat K.S."/>
            <person name="Cronin L.A."/>
            <person name="Shen M."/>
            <person name="Pai G."/>
            <person name="Van Aken S."/>
            <person name="Umayam L."/>
            <person name="Tallon L.J."/>
            <person name="Gill J.E."/>
            <person name="Adams M.D."/>
            <person name="Carrera A.J."/>
            <person name="Creasy T.H."/>
            <person name="Goodman H.M."/>
            <person name="Somerville C.R."/>
            <person name="Copenhaver G.P."/>
            <person name="Preuss D."/>
            <person name="Nierman W.C."/>
            <person name="White O."/>
            <person name="Eisen J.A."/>
            <person name="Salzberg S.L."/>
            <person name="Fraser C.M."/>
            <person name="Venter J.C."/>
        </authorList>
    </citation>
    <scope>NUCLEOTIDE SEQUENCE [LARGE SCALE GENOMIC DNA]</scope>
    <source>
        <strain>cv. Columbia</strain>
    </source>
</reference>
<reference key="2">
    <citation type="journal article" date="2017" name="Plant J.">
        <title>Araport11: a complete reannotation of the Arabidopsis thaliana reference genome.</title>
        <authorList>
            <person name="Cheng C.Y."/>
            <person name="Krishnakumar V."/>
            <person name="Chan A.P."/>
            <person name="Thibaud-Nissen F."/>
            <person name="Schobel S."/>
            <person name="Town C.D."/>
        </authorList>
    </citation>
    <scope>GENOME REANNOTATION</scope>
    <source>
        <strain>cv. Columbia</strain>
    </source>
</reference>
<reference key="3">
    <citation type="submission" date="2005-05" db="EMBL/GenBank/DDBJ databases">
        <authorList>
            <person name="Underwood B.A."/>
            <person name="Xiao Y.-L."/>
            <person name="Moskal W.A. Jr."/>
            <person name="Monaghan E.L."/>
            <person name="Wang W."/>
            <person name="Redman J.C."/>
            <person name="Wu H.C."/>
            <person name="Utterback T."/>
            <person name="Town C.D."/>
        </authorList>
    </citation>
    <scope>NUCLEOTIDE SEQUENCE [LARGE SCALE MRNA]</scope>
    <source>
        <strain>cv. Columbia</strain>
    </source>
</reference>
<reference key="4">
    <citation type="journal article" date="2002" name="Genome Biol.">
        <title>Evaluation and classification of RING-finger domains encoded by the Arabidopsis genome.</title>
        <authorList>
            <person name="Kosarev P."/>
            <person name="Mayer K.F.X."/>
            <person name="Hardtke C.S."/>
        </authorList>
    </citation>
    <scope>GENE FAMILY ORGANIZATION</scope>
</reference>
<reference key="5">
    <citation type="journal article" date="2006" name="J. Mol. Evol.">
        <title>The ATL gene family from Arabidopsis thaliana and Oryza sativa comprises a large number of putative ubiquitin ligases of the RING-H2 type.</title>
        <authorList>
            <person name="Serrano M."/>
            <person name="Parra S."/>
            <person name="Alcaraz L.D."/>
            <person name="Guzman P."/>
        </authorList>
    </citation>
    <scope>NOMENCLATURE</scope>
    <scope>GENE FAMILY ORGANIZATION</scope>
</reference>
<gene>
    <name type="primary">ATL38</name>
    <name type="ordered locus">At2g34990</name>
    <name type="ORF">F19I3.22</name>
</gene>
<organism>
    <name type="scientific">Arabidopsis thaliana</name>
    <name type="common">Mouse-ear cress</name>
    <dbReference type="NCBI Taxonomy" id="3702"/>
    <lineage>
        <taxon>Eukaryota</taxon>
        <taxon>Viridiplantae</taxon>
        <taxon>Streptophyta</taxon>
        <taxon>Embryophyta</taxon>
        <taxon>Tracheophyta</taxon>
        <taxon>Spermatophyta</taxon>
        <taxon>Magnoliopsida</taxon>
        <taxon>eudicotyledons</taxon>
        <taxon>Gunneridae</taxon>
        <taxon>Pentapetalae</taxon>
        <taxon>rosids</taxon>
        <taxon>malvids</taxon>
        <taxon>Brassicales</taxon>
        <taxon>Brassicaceae</taxon>
        <taxon>Camelineae</taxon>
        <taxon>Arabidopsis</taxon>
    </lineage>
</organism>
<name>ATL38_ARATH</name>
<dbReference type="EC" id="2.3.2.27" evidence="5"/>
<dbReference type="EMBL" id="AC004238">
    <property type="protein sequence ID" value="AAC12838.1"/>
    <property type="molecule type" value="Genomic_DNA"/>
</dbReference>
<dbReference type="EMBL" id="CP002685">
    <property type="protein sequence ID" value="AEC09046.1"/>
    <property type="molecule type" value="Genomic_DNA"/>
</dbReference>
<dbReference type="EMBL" id="DQ056567">
    <property type="protein sequence ID" value="AAY78717.1"/>
    <property type="molecule type" value="mRNA"/>
</dbReference>
<dbReference type="PIR" id="T00480">
    <property type="entry name" value="T00480"/>
</dbReference>
<dbReference type="RefSeq" id="NP_181044.1">
    <property type="nucleotide sequence ID" value="NM_129051.2"/>
</dbReference>
<dbReference type="SMR" id="O64762"/>
<dbReference type="STRING" id="3702.O64762"/>
<dbReference type="PaxDb" id="3702-AT2G34990.1"/>
<dbReference type="EnsemblPlants" id="AT2G34990.1">
    <property type="protein sequence ID" value="AT2G34990.1"/>
    <property type="gene ID" value="AT2G34990"/>
</dbReference>
<dbReference type="GeneID" id="818063"/>
<dbReference type="Gramene" id="AT2G34990.1">
    <property type="protein sequence ID" value="AT2G34990.1"/>
    <property type="gene ID" value="AT2G34990"/>
</dbReference>
<dbReference type="KEGG" id="ath:AT2G34990"/>
<dbReference type="Araport" id="AT2G34990"/>
<dbReference type="TAIR" id="AT2G34990">
    <property type="gene designation" value="ATL38"/>
</dbReference>
<dbReference type="eggNOG" id="KOG0800">
    <property type="taxonomic scope" value="Eukaryota"/>
</dbReference>
<dbReference type="HOGENOM" id="CLU_035191_1_0_1"/>
<dbReference type="InParanoid" id="O64762"/>
<dbReference type="PhylomeDB" id="O64762"/>
<dbReference type="UniPathway" id="UPA00143"/>
<dbReference type="PRO" id="PR:O64762"/>
<dbReference type="Proteomes" id="UP000006548">
    <property type="component" value="Chromosome 2"/>
</dbReference>
<dbReference type="ExpressionAtlas" id="O64762">
    <property type="expression patterns" value="baseline and differential"/>
</dbReference>
<dbReference type="GO" id="GO:0016020">
    <property type="term" value="C:membrane"/>
    <property type="evidence" value="ECO:0007669"/>
    <property type="project" value="UniProtKB-SubCell"/>
</dbReference>
<dbReference type="GO" id="GO:0016740">
    <property type="term" value="F:transferase activity"/>
    <property type="evidence" value="ECO:0007669"/>
    <property type="project" value="UniProtKB-KW"/>
</dbReference>
<dbReference type="GO" id="GO:0008270">
    <property type="term" value="F:zinc ion binding"/>
    <property type="evidence" value="ECO:0007669"/>
    <property type="project" value="UniProtKB-KW"/>
</dbReference>
<dbReference type="GO" id="GO:0016567">
    <property type="term" value="P:protein ubiquitination"/>
    <property type="evidence" value="ECO:0007669"/>
    <property type="project" value="UniProtKB-UniPathway"/>
</dbReference>
<dbReference type="CDD" id="cd16461">
    <property type="entry name" value="RING-H2_EL5-like"/>
    <property type="match status" value="1"/>
</dbReference>
<dbReference type="FunFam" id="3.30.40.10:FF:000187">
    <property type="entry name" value="E3 ubiquitin-protein ligase ATL6"/>
    <property type="match status" value="1"/>
</dbReference>
<dbReference type="Gene3D" id="3.30.40.10">
    <property type="entry name" value="Zinc/RING finger domain, C3HC4 (zinc finger)"/>
    <property type="match status" value="1"/>
</dbReference>
<dbReference type="InterPro" id="IPR044600">
    <property type="entry name" value="ATL1/ATL16-like"/>
</dbReference>
<dbReference type="InterPro" id="IPR001841">
    <property type="entry name" value="Znf_RING"/>
</dbReference>
<dbReference type="InterPro" id="IPR013083">
    <property type="entry name" value="Znf_RING/FYVE/PHD"/>
</dbReference>
<dbReference type="PANTHER" id="PTHR46913">
    <property type="entry name" value="RING-H2 FINGER PROTEIN ATL16"/>
    <property type="match status" value="1"/>
</dbReference>
<dbReference type="PANTHER" id="PTHR46913:SF1">
    <property type="entry name" value="RING-H2 FINGER PROTEIN ATL16"/>
    <property type="match status" value="1"/>
</dbReference>
<dbReference type="Pfam" id="PF13639">
    <property type="entry name" value="zf-RING_2"/>
    <property type="match status" value="1"/>
</dbReference>
<dbReference type="SMART" id="SM00184">
    <property type="entry name" value="RING"/>
    <property type="match status" value="1"/>
</dbReference>
<dbReference type="SUPFAM" id="SSF57850">
    <property type="entry name" value="RING/U-box"/>
    <property type="match status" value="1"/>
</dbReference>
<dbReference type="PROSITE" id="PS50089">
    <property type="entry name" value="ZF_RING_2"/>
    <property type="match status" value="1"/>
</dbReference>
<protein>
    <recommendedName>
        <fullName>RING-H2 finger protein ATL38</fullName>
        <ecNumber evidence="5">2.3.2.27</ecNumber>
    </recommendedName>
    <alternativeName>
        <fullName evidence="5">RING-type E3 ubiquitin transferase ATL38</fullName>
    </alternativeName>
</protein>
<proteinExistence type="evidence at transcript level"/>
<evidence type="ECO:0000250" key="1"/>
<evidence type="ECO:0000255" key="2"/>
<evidence type="ECO:0000255" key="3">
    <source>
        <dbReference type="PROSITE-ProRule" id="PRU00175"/>
    </source>
</evidence>
<evidence type="ECO:0000256" key="4">
    <source>
        <dbReference type="SAM" id="MobiDB-lite"/>
    </source>
</evidence>
<evidence type="ECO:0000305" key="5"/>
<feature type="chain" id="PRO_0000055779" description="RING-H2 finger protein ATL38">
    <location>
        <begin position="1"/>
        <end position="302"/>
    </location>
</feature>
<feature type="transmembrane region" description="Helical" evidence="2">
    <location>
        <begin position="15"/>
        <end position="35"/>
    </location>
</feature>
<feature type="zinc finger region" description="RING-type; atypical" evidence="3">
    <location>
        <begin position="96"/>
        <end position="138"/>
    </location>
</feature>
<feature type="region of interest" description="Disordered" evidence="4">
    <location>
        <begin position="279"/>
        <end position="302"/>
    </location>
</feature>
<feature type="compositionally biased region" description="Basic and acidic residues" evidence="4">
    <location>
        <begin position="286"/>
        <end position="302"/>
    </location>
</feature>
<sequence>MVQPGTEIKASDLTLLVITIILFAIFIVGLASVCFRWTSRQFYSQESINPFTDSDVESRTSITAVRGLDEAIINSFPTFLYSEVKERRIGIGGVECAVCICEFEDHETLRLMPECCHVFHADCVSVWLSDHSTCPLCRVDLCLQPGERSYLNPEPDLVESTNSHLFDGVTWTNRNRPSRSWSTRLSQCRVSQILISRSHSTGHSVVQPLDNLDRFTLRLPEEVRRQLTKKTVDNVAFSQARSSRRGYRSRSAGSERSVFSYQRRMHSFSDCAWSTSCGGEAVAPSKDSRRISVEQSQLDDRV</sequence>
<accession>O64762</accession>
<accession>Q4PSR9</accession>